<proteinExistence type="inferred from homology"/>
<comment type="function">
    <text>The plasma membrane ATPase of plants and fungi is a hydrogen ion pump. The proton gradient it generates drives the active transport of nutrients by H(+)-symport. The resulting external acidification and/or internal alkinization may mediate growth responses.</text>
</comment>
<comment type="catalytic activity">
    <reaction>
        <text>ATP + H2O + H(+)(in) = ADP + phosphate + 2 H(+)(out)</text>
        <dbReference type="Rhea" id="RHEA:20852"/>
        <dbReference type="ChEBI" id="CHEBI:15377"/>
        <dbReference type="ChEBI" id="CHEBI:15378"/>
        <dbReference type="ChEBI" id="CHEBI:30616"/>
        <dbReference type="ChEBI" id="CHEBI:43474"/>
        <dbReference type="ChEBI" id="CHEBI:456216"/>
        <dbReference type="EC" id="7.1.2.1"/>
    </reaction>
</comment>
<comment type="subcellular location">
    <subcellularLocation>
        <location>Cell membrane</location>
        <topology>Multi-pass membrane protein</topology>
    </subcellularLocation>
</comment>
<comment type="similarity">
    <text evidence="4">Belongs to the cation transport ATPase (P-type) (TC 3.A.3) family. Type IIIA subfamily.</text>
</comment>
<evidence type="ECO:0000250" key="1"/>
<evidence type="ECO:0000255" key="2"/>
<evidence type="ECO:0000256" key="3">
    <source>
        <dbReference type="SAM" id="MobiDB-lite"/>
    </source>
</evidence>
<evidence type="ECO:0000305" key="4"/>
<reference key="1">
    <citation type="journal article" date="1991" name="J. Biochem.">
        <title>Molecular cloning and sequencing of plasma membrane H(+)-ATPase gene from the salt-tolerant yeast Zygosaccharomyces rouxii.</title>
        <authorList>
            <person name="Watanabe Y."/>
            <person name="Shiramizu M."/>
            <person name="Tamai Y."/>
        </authorList>
    </citation>
    <scope>NUCLEOTIDE SEQUENCE [GENOMIC DNA]</scope>
    <source>
        <strain>ATCC 42981 / IAM 12879 / JCM 22060 / S-96</strain>
    </source>
</reference>
<protein>
    <recommendedName>
        <fullName>Plasma membrane ATPase</fullName>
        <ecNumber>7.1.2.1</ecNumber>
    </recommendedName>
    <alternativeName>
        <fullName>Proton pump</fullName>
    </alternativeName>
</protein>
<keyword id="KW-0067">ATP-binding</keyword>
<keyword id="KW-1003">Cell membrane</keyword>
<keyword id="KW-0375">Hydrogen ion transport</keyword>
<keyword id="KW-0406">Ion transport</keyword>
<keyword id="KW-0460">Magnesium</keyword>
<keyword id="KW-0472">Membrane</keyword>
<keyword id="KW-0479">Metal-binding</keyword>
<keyword id="KW-0547">Nucleotide-binding</keyword>
<keyword id="KW-0597">Phosphoprotein</keyword>
<keyword id="KW-1278">Translocase</keyword>
<keyword id="KW-0812">Transmembrane</keyword>
<keyword id="KW-1133">Transmembrane helix</keyword>
<keyword id="KW-0813">Transport</keyword>
<sequence>MSDERITEKPPHQQPESEGEPVPEEEVEEETEEEVPDEQSSEDDDIDGLIDELQSQEAHEEAEEDDGPAAAGEARKIPEELLQTDPSVGLSSDEVVNRRKKYGLNQMREESENLLVKFLMFFIGPIQFVMEAAAVLAAGLEDWVDFGVICGLLFLNAGVGFIQEFQAGSIVEELKKTLANTATVIRDGSVQEAPANEIVPGDILKLEDGTVIPADGRLVTEECFLQVDQSSITGESLAVDKHYGDEVFSSSTVKRGEGFMIVTATGDNTFVGRAASLVNAAAGGQGHFTEVLNGIGVILLVLVVITLLLIWTACFYRTVRIVPILRYTLGITIVGVPVGLPAVVTTTMAGGAAYLAKKQAIVQKLSAIESLAGVEILCSDKTGTLTKNKLSLHEPYTVEGVSSDDLMLTACLAASRKKKGLDAIDKAFLKSLAQYPKAKGALTKYKVLEFHPFDPVSKKVTAVVESPEGERIICVKGAPLFVLKTVEEDHPIPEDVHENYENKVAELASRGFRALGVARKRGEGHWEILGVMPCMDPPRDDTAATVNEAKRLGLSVKMLTGDAVGIAKETCRQLGLGTNIYDAERLGLGGGGSMPGSEMYDFVENADGFAEVFPQHKFAVVDILQQRGYLVAMTGDGVNDAPSLKKADTGIAVEGATDAARSAADIVFLAPGLSAIIDALKTSRQIFHRMYAYVVYRIALSLHLEIFLGLWIAILNHSLDIDLIVFIAIFADVATLAIAYDNAPFSPSPVKWNLPRLWGMSIMMGIILAAGTWITLTTMFLPKGGIIQNFGSIDGILFLEISLTENWLIFITRAVGPFWSSIPSWQLAGAVFVVDVVATMFTLFGWWSQNWTDIVTVVRIYIWSIGIFCCLGGAYYLMSESETFDRLMNGKPLKENKSTRSVEDFLASMRRVSTQHEKGN</sequence>
<feature type="chain" id="PRO_0000046273" description="Plasma membrane ATPase">
    <location>
        <begin position="1"/>
        <end position="920"/>
    </location>
</feature>
<feature type="topological domain" description="Cytoplasmic" evidence="2">
    <location>
        <begin position="1"/>
        <end position="117"/>
    </location>
</feature>
<feature type="transmembrane region" description="Helical; Name=1" evidence="2">
    <location>
        <begin position="118"/>
        <end position="138"/>
    </location>
</feature>
<feature type="topological domain" description="Extracellular" evidence="2">
    <location>
        <begin position="139"/>
        <end position="142"/>
    </location>
</feature>
<feature type="transmembrane region" description="Helical; Name=2" evidence="2">
    <location>
        <begin position="143"/>
        <end position="162"/>
    </location>
</feature>
<feature type="topological domain" description="Cytoplasmic" evidence="2">
    <location>
        <begin position="163"/>
        <end position="293"/>
    </location>
</feature>
<feature type="transmembrane region" description="Helical; Name=3" evidence="2">
    <location>
        <begin position="294"/>
        <end position="315"/>
    </location>
</feature>
<feature type="topological domain" description="Extracellular" evidence="2">
    <location>
        <begin position="316"/>
        <end position="326"/>
    </location>
</feature>
<feature type="transmembrane region" description="Helical; Name=4" evidence="2">
    <location>
        <begin position="327"/>
        <end position="349"/>
    </location>
</feature>
<feature type="topological domain" description="Cytoplasmic" evidence="2">
    <location>
        <begin position="350"/>
        <end position="721"/>
    </location>
</feature>
<feature type="transmembrane region" description="Helical; Name=5" evidence="2">
    <location>
        <begin position="722"/>
        <end position="740"/>
    </location>
</feature>
<feature type="topological domain" description="Extracellular" evidence="2">
    <location>
        <begin position="741"/>
        <end position="756"/>
    </location>
</feature>
<feature type="transmembrane region" description="Helical; Name=6" evidence="2">
    <location>
        <begin position="757"/>
        <end position="776"/>
    </location>
</feature>
<feature type="topological domain" description="Cytoplasmic" evidence="2">
    <location>
        <begin position="777"/>
        <end position="826"/>
    </location>
</feature>
<feature type="transmembrane region" description="Helical; Name=7" evidence="2">
    <location>
        <begin position="827"/>
        <end position="847"/>
    </location>
</feature>
<feature type="topological domain" description="Extracellular" evidence="2">
    <location>
        <begin position="848"/>
        <end position="859"/>
    </location>
</feature>
<feature type="transmembrane region" description="Helical; Name=8" evidence="2">
    <location>
        <begin position="860"/>
        <end position="876"/>
    </location>
</feature>
<feature type="topological domain" description="Cytoplasmic" evidence="2">
    <location>
        <begin position="877"/>
        <end position="920"/>
    </location>
</feature>
<feature type="region of interest" description="Disordered" evidence="3">
    <location>
        <begin position="1"/>
        <end position="71"/>
    </location>
</feature>
<feature type="compositionally biased region" description="Basic and acidic residues" evidence="3">
    <location>
        <begin position="1"/>
        <end position="11"/>
    </location>
</feature>
<feature type="compositionally biased region" description="Acidic residues" evidence="3">
    <location>
        <begin position="17"/>
        <end position="50"/>
    </location>
</feature>
<feature type="active site" description="4-aspartylphosphate intermediate" evidence="1">
    <location>
        <position position="380"/>
    </location>
</feature>
<feature type="binding site" evidence="1">
    <location>
        <position position="636"/>
    </location>
    <ligand>
        <name>Mg(2+)</name>
        <dbReference type="ChEBI" id="CHEBI:18420"/>
    </ligand>
</feature>
<feature type="binding site" evidence="1">
    <location>
        <position position="640"/>
    </location>
    <ligand>
        <name>Mg(2+)</name>
        <dbReference type="ChEBI" id="CHEBI:18420"/>
    </ligand>
</feature>
<name>PMA1_ZYGRO</name>
<dbReference type="EC" id="7.1.2.1"/>
<dbReference type="EMBL" id="D10764">
    <property type="protein sequence ID" value="BAA01594.1"/>
    <property type="molecule type" value="Genomic_DNA"/>
</dbReference>
<dbReference type="PIR" id="JX0181">
    <property type="entry name" value="PXKZP"/>
</dbReference>
<dbReference type="SMR" id="P24545"/>
<dbReference type="eggNOG" id="KOG0205">
    <property type="taxonomic scope" value="Eukaryota"/>
</dbReference>
<dbReference type="GO" id="GO:0005886">
    <property type="term" value="C:plasma membrane"/>
    <property type="evidence" value="ECO:0007669"/>
    <property type="project" value="UniProtKB-SubCell"/>
</dbReference>
<dbReference type="GO" id="GO:0005524">
    <property type="term" value="F:ATP binding"/>
    <property type="evidence" value="ECO:0007669"/>
    <property type="project" value="UniProtKB-KW"/>
</dbReference>
<dbReference type="GO" id="GO:0016887">
    <property type="term" value="F:ATP hydrolysis activity"/>
    <property type="evidence" value="ECO:0007669"/>
    <property type="project" value="InterPro"/>
</dbReference>
<dbReference type="GO" id="GO:0046872">
    <property type="term" value="F:metal ion binding"/>
    <property type="evidence" value="ECO:0007669"/>
    <property type="project" value="UniProtKB-KW"/>
</dbReference>
<dbReference type="GO" id="GO:0008553">
    <property type="term" value="F:P-type proton-exporting transporter activity"/>
    <property type="evidence" value="ECO:0007669"/>
    <property type="project" value="UniProtKB-EC"/>
</dbReference>
<dbReference type="GO" id="GO:0120029">
    <property type="term" value="P:proton export across plasma membrane"/>
    <property type="evidence" value="ECO:0007669"/>
    <property type="project" value="InterPro"/>
</dbReference>
<dbReference type="CDD" id="cd02076">
    <property type="entry name" value="P-type_ATPase_H"/>
    <property type="match status" value="1"/>
</dbReference>
<dbReference type="FunFam" id="2.70.150.10:FF:000011">
    <property type="entry name" value="Plasma membrane ATPase"/>
    <property type="match status" value="1"/>
</dbReference>
<dbReference type="FunFam" id="3.40.1110.10:FF:000005">
    <property type="entry name" value="Plasma membrane ATPase"/>
    <property type="match status" value="1"/>
</dbReference>
<dbReference type="FunFam" id="3.40.50.1000:FF:000008">
    <property type="entry name" value="Plasma membrane ATPase"/>
    <property type="match status" value="1"/>
</dbReference>
<dbReference type="Gene3D" id="3.40.1110.10">
    <property type="entry name" value="Calcium-transporting ATPase, cytoplasmic domain N"/>
    <property type="match status" value="1"/>
</dbReference>
<dbReference type="Gene3D" id="2.70.150.10">
    <property type="entry name" value="Calcium-transporting ATPase, cytoplasmic transduction domain A"/>
    <property type="match status" value="1"/>
</dbReference>
<dbReference type="Gene3D" id="1.20.1110.10">
    <property type="entry name" value="Calcium-transporting ATPase, transmembrane domain"/>
    <property type="match status" value="1"/>
</dbReference>
<dbReference type="Gene3D" id="3.40.50.1000">
    <property type="entry name" value="HAD superfamily/HAD-like"/>
    <property type="match status" value="1"/>
</dbReference>
<dbReference type="InterPro" id="IPR004014">
    <property type="entry name" value="ATPase_P-typ_cation-transptr_N"/>
</dbReference>
<dbReference type="InterPro" id="IPR023299">
    <property type="entry name" value="ATPase_P-typ_cyto_dom_N"/>
</dbReference>
<dbReference type="InterPro" id="IPR018303">
    <property type="entry name" value="ATPase_P-typ_P_site"/>
</dbReference>
<dbReference type="InterPro" id="IPR023298">
    <property type="entry name" value="ATPase_P-typ_TM_dom_sf"/>
</dbReference>
<dbReference type="InterPro" id="IPR008250">
    <property type="entry name" value="ATPase_P-typ_transduc_dom_A_sf"/>
</dbReference>
<dbReference type="InterPro" id="IPR036412">
    <property type="entry name" value="HAD-like_sf"/>
</dbReference>
<dbReference type="InterPro" id="IPR023214">
    <property type="entry name" value="HAD_sf"/>
</dbReference>
<dbReference type="InterPro" id="IPR006534">
    <property type="entry name" value="P-type_ATPase_IIIA"/>
</dbReference>
<dbReference type="InterPro" id="IPR001757">
    <property type="entry name" value="P_typ_ATPase"/>
</dbReference>
<dbReference type="InterPro" id="IPR044492">
    <property type="entry name" value="P_typ_ATPase_HD_dom"/>
</dbReference>
<dbReference type="NCBIfam" id="TIGR01647">
    <property type="entry name" value="ATPase-IIIA_H"/>
    <property type="match status" value="1"/>
</dbReference>
<dbReference type="NCBIfam" id="TIGR01494">
    <property type="entry name" value="ATPase_P-type"/>
    <property type="match status" value="3"/>
</dbReference>
<dbReference type="PANTHER" id="PTHR42861">
    <property type="entry name" value="CALCIUM-TRANSPORTING ATPASE"/>
    <property type="match status" value="1"/>
</dbReference>
<dbReference type="Pfam" id="PF00690">
    <property type="entry name" value="Cation_ATPase_N"/>
    <property type="match status" value="1"/>
</dbReference>
<dbReference type="Pfam" id="PF00122">
    <property type="entry name" value="E1-E2_ATPase"/>
    <property type="match status" value="1"/>
</dbReference>
<dbReference type="Pfam" id="PF00702">
    <property type="entry name" value="Hydrolase"/>
    <property type="match status" value="1"/>
</dbReference>
<dbReference type="PRINTS" id="PR00119">
    <property type="entry name" value="CATATPASE"/>
</dbReference>
<dbReference type="PRINTS" id="PR00120">
    <property type="entry name" value="HATPASE"/>
</dbReference>
<dbReference type="SFLD" id="SFLDG00002">
    <property type="entry name" value="C1.7:_P-type_atpase_like"/>
    <property type="match status" value="1"/>
</dbReference>
<dbReference type="SFLD" id="SFLDF00027">
    <property type="entry name" value="p-type_atpase"/>
    <property type="match status" value="1"/>
</dbReference>
<dbReference type="SMART" id="SM00831">
    <property type="entry name" value="Cation_ATPase_N"/>
    <property type="match status" value="1"/>
</dbReference>
<dbReference type="SUPFAM" id="SSF81653">
    <property type="entry name" value="Calcium ATPase, transduction domain A"/>
    <property type="match status" value="1"/>
</dbReference>
<dbReference type="SUPFAM" id="SSF81665">
    <property type="entry name" value="Calcium ATPase, transmembrane domain M"/>
    <property type="match status" value="1"/>
</dbReference>
<dbReference type="SUPFAM" id="SSF56784">
    <property type="entry name" value="HAD-like"/>
    <property type="match status" value="1"/>
</dbReference>
<dbReference type="PROSITE" id="PS00154">
    <property type="entry name" value="ATPASE_E1_E2"/>
    <property type="match status" value="1"/>
</dbReference>
<accession>P24545</accession>
<organism>
    <name type="scientific">Zygosaccharomyces rouxii</name>
    <dbReference type="NCBI Taxonomy" id="4956"/>
    <lineage>
        <taxon>Eukaryota</taxon>
        <taxon>Fungi</taxon>
        <taxon>Dikarya</taxon>
        <taxon>Ascomycota</taxon>
        <taxon>Saccharomycotina</taxon>
        <taxon>Saccharomycetes</taxon>
        <taxon>Saccharomycetales</taxon>
        <taxon>Saccharomycetaceae</taxon>
        <taxon>Zygosaccharomyces</taxon>
    </lineage>
</organism>